<name>P2X4A_DANRE</name>
<proteinExistence type="evidence at protein level"/>
<keyword id="KW-0002">3D-structure</keyword>
<keyword id="KW-0067">ATP-binding</keyword>
<keyword id="KW-1003">Cell membrane</keyword>
<keyword id="KW-1015">Disulfide bond</keyword>
<keyword id="KW-0325">Glycoprotein</keyword>
<keyword id="KW-0407">Ion channel</keyword>
<keyword id="KW-0406">Ion transport</keyword>
<keyword id="KW-1071">Ligand-gated ion channel</keyword>
<keyword id="KW-0458">Lysosome</keyword>
<keyword id="KW-0472">Membrane</keyword>
<keyword id="KW-0547">Nucleotide-binding</keyword>
<keyword id="KW-0675">Receptor</keyword>
<keyword id="KW-1185">Reference proteome</keyword>
<keyword id="KW-0812">Transmembrane</keyword>
<keyword id="KW-1133">Transmembrane helix</keyword>
<keyword id="KW-0813">Transport</keyword>
<organism>
    <name type="scientific">Danio rerio</name>
    <name type="common">Zebrafish</name>
    <name type="synonym">Brachydanio rerio</name>
    <dbReference type="NCBI Taxonomy" id="7955"/>
    <lineage>
        <taxon>Eukaryota</taxon>
        <taxon>Metazoa</taxon>
        <taxon>Chordata</taxon>
        <taxon>Craniata</taxon>
        <taxon>Vertebrata</taxon>
        <taxon>Euteleostomi</taxon>
        <taxon>Actinopterygii</taxon>
        <taxon>Neopterygii</taxon>
        <taxon>Teleostei</taxon>
        <taxon>Ostariophysi</taxon>
        <taxon>Cypriniformes</taxon>
        <taxon>Danionidae</taxon>
        <taxon>Danioninae</taxon>
        <taxon>Danio</taxon>
    </lineage>
</organism>
<comment type="function">
    <text evidence="1 2 3 7">ATP-gated nonselective transmembrane cation channel permeable to potassium, sodium and calcium (By similarity). CTP, but not GTP or UTP, functions as a weak affinity agonist for P2RX4 (PubMed:28332633). Activated by extracellularly released ATP, it plays multiple role in immunity and central nervous system physiology (By similarity). Could also function as an ATP-gated cation channel of lysosomal membranes (By similarity).</text>
</comment>
<comment type="catalytic activity">
    <reaction evidence="2">
        <text>K(+)(in) = K(+)(out)</text>
        <dbReference type="Rhea" id="RHEA:29463"/>
        <dbReference type="ChEBI" id="CHEBI:29103"/>
    </reaction>
</comment>
<comment type="catalytic activity">
    <reaction evidence="2">
        <text>Na(+)(in) = Na(+)(out)</text>
        <dbReference type="Rhea" id="RHEA:34963"/>
        <dbReference type="ChEBI" id="CHEBI:29101"/>
    </reaction>
</comment>
<comment type="catalytic activity">
    <reaction evidence="2">
        <text>Ca(2+)(in) = Ca(2+)(out)</text>
        <dbReference type="Rhea" id="RHEA:29671"/>
        <dbReference type="ChEBI" id="CHEBI:29108"/>
    </reaction>
</comment>
<comment type="activity regulation">
    <text evidence="1 2 7">Activated by ATP (PubMed:28332633). pH-dependent and inhibited by acidic pH (By similarity).</text>
</comment>
<comment type="subunit">
    <text evidence="1 6 7">Functional P2XRs are organized as homomeric and heteromeric trimers (By similarity). Forms homotrimer (PubMed:22535247, PubMed:28332633).</text>
</comment>
<comment type="interaction">
    <interactant intactId="EBI-15795948">
        <id>F8W463</id>
    </interactant>
    <interactant intactId="EBI-15795948">
        <id>F8W463</id>
        <label>p2rx4a</label>
    </interactant>
    <organismsDiffer>false</organismsDiffer>
    <experiments>5</experiments>
</comment>
<comment type="subcellular location">
    <subcellularLocation>
        <location evidence="2">Cell membrane</location>
        <topology evidence="4">Multi-pass membrane protein</topology>
    </subcellularLocation>
    <subcellularLocation>
        <location evidence="2">Lysosome membrane</location>
        <topology evidence="4">Multi-pass membrane protein</topology>
    </subcellularLocation>
</comment>
<comment type="similarity">
    <text evidence="8">Belongs to the P2X receptor family.</text>
</comment>
<accession>F8W463</accession>
<accession>Q6NYR1</accession>
<accession>Q98TZ0</accession>
<dbReference type="EMBL" id="AF317643">
    <property type="protein sequence ID" value="AAK00945.1"/>
    <property type="molecule type" value="mRNA"/>
</dbReference>
<dbReference type="EMBL" id="CR847785">
    <property type="status" value="NOT_ANNOTATED_CDS"/>
    <property type="molecule type" value="Genomic_DNA"/>
</dbReference>
<dbReference type="EMBL" id="BC066495">
    <property type="protein sequence ID" value="AAH66495.1"/>
    <property type="molecule type" value="mRNA"/>
</dbReference>
<dbReference type="RefSeq" id="NP_705939.1">
    <property type="nucleotide sequence ID" value="NM_153653.1"/>
</dbReference>
<dbReference type="PDB" id="3H9V">
    <property type="method" value="X-ray"/>
    <property type="resolution" value="3.10 A"/>
    <property type="chains" value="A=28-381"/>
</dbReference>
<dbReference type="PDB" id="3I5D">
    <property type="method" value="X-ray"/>
    <property type="resolution" value="3.46 A"/>
    <property type="chains" value="A/B/C=28-381"/>
</dbReference>
<dbReference type="PDB" id="4DW0">
    <property type="method" value="X-ray"/>
    <property type="resolution" value="2.90 A"/>
    <property type="chains" value="A=28-365"/>
</dbReference>
<dbReference type="PDB" id="4DW1">
    <property type="method" value="X-ray"/>
    <property type="resolution" value="2.80 A"/>
    <property type="chains" value="A=28-365"/>
</dbReference>
<dbReference type="PDB" id="5WZY">
    <property type="method" value="X-ray"/>
    <property type="resolution" value="2.80 A"/>
    <property type="chains" value="A=28-365"/>
</dbReference>
<dbReference type="PDB" id="8JV5">
    <property type="method" value="EM"/>
    <property type="resolution" value="3.23 A"/>
    <property type="chains" value="A/B/C=9-359"/>
</dbReference>
<dbReference type="PDB" id="8JV6">
    <property type="method" value="EM"/>
    <property type="resolution" value="3.43 A"/>
    <property type="chains" value="A/B/C=9-358"/>
</dbReference>
<dbReference type="PDBsum" id="3H9V"/>
<dbReference type="PDBsum" id="3I5D"/>
<dbReference type="PDBsum" id="4DW0"/>
<dbReference type="PDBsum" id="4DW1"/>
<dbReference type="PDBsum" id="5WZY"/>
<dbReference type="PDBsum" id="8JV5"/>
<dbReference type="PDBsum" id="8JV6"/>
<dbReference type="EMDB" id="EMD-36668"/>
<dbReference type="EMDB" id="EMD-36669"/>
<dbReference type="SMR" id="F8W463"/>
<dbReference type="DIP" id="DIP-59282N"/>
<dbReference type="TCDB" id="1.A.7.1.4">
    <property type="family name" value="the atp-gated p2x receptor cation channel (p2x receptor) family"/>
</dbReference>
<dbReference type="TCDB" id="1.A.7.1.8">
    <property type="family name" value="the atp-gated p2x receptor cation channel (p2x receptor) family"/>
</dbReference>
<dbReference type="Ensembl" id="ENSDART00000149126">
    <property type="protein sequence ID" value="ENSDARP00000123980"/>
    <property type="gene ID" value="ENSDARG00000044752"/>
</dbReference>
<dbReference type="GeneID" id="259258"/>
<dbReference type="KEGG" id="dre:259258"/>
<dbReference type="AGR" id="ZFIN:ZDB-GENE-020806-2"/>
<dbReference type="CTD" id="259258"/>
<dbReference type="ZFIN" id="ZDB-GENE-020806-2">
    <property type="gene designation" value="p2rx4a"/>
</dbReference>
<dbReference type="OrthoDB" id="494673at2759"/>
<dbReference type="Reactome" id="R-DRE-139853">
    <property type="pathway name" value="Elevation of cytosolic Ca2+ levels"/>
</dbReference>
<dbReference type="Reactome" id="R-DRE-418346">
    <property type="pathway name" value="Platelet homeostasis"/>
</dbReference>
<dbReference type="EvolutionaryTrace" id="F8W463"/>
<dbReference type="Proteomes" id="UP000000437">
    <property type="component" value="Alternate scaffold 21"/>
</dbReference>
<dbReference type="Proteomes" id="UP000000437">
    <property type="component" value="Chromosome 21"/>
</dbReference>
<dbReference type="Bgee" id="ENSDARG00000044752">
    <property type="expression patterns" value="Expressed in intestine and 20 other cell types or tissues"/>
</dbReference>
<dbReference type="ExpressionAtlas" id="F8W463">
    <property type="expression patterns" value="baseline and differential"/>
</dbReference>
<dbReference type="GO" id="GO:0005765">
    <property type="term" value="C:lysosomal membrane"/>
    <property type="evidence" value="ECO:0007669"/>
    <property type="project" value="UniProtKB-SubCell"/>
</dbReference>
<dbReference type="GO" id="GO:0016020">
    <property type="term" value="C:membrane"/>
    <property type="evidence" value="ECO:0000314"/>
    <property type="project" value="ZFIN"/>
</dbReference>
<dbReference type="GO" id="GO:0034702">
    <property type="term" value="C:monoatomic ion channel complex"/>
    <property type="evidence" value="ECO:0000314"/>
    <property type="project" value="ZFIN"/>
</dbReference>
<dbReference type="GO" id="GO:0005886">
    <property type="term" value="C:plasma membrane"/>
    <property type="evidence" value="ECO:0007669"/>
    <property type="project" value="UniProtKB-SubCell"/>
</dbReference>
<dbReference type="GO" id="GO:0098794">
    <property type="term" value="C:postsynapse"/>
    <property type="evidence" value="ECO:0007669"/>
    <property type="project" value="GOC"/>
</dbReference>
<dbReference type="GO" id="GO:1902495">
    <property type="term" value="C:transmembrane transporter complex"/>
    <property type="evidence" value="ECO:0000314"/>
    <property type="project" value="ZFIN"/>
</dbReference>
<dbReference type="GO" id="GO:0005524">
    <property type="term" value="F:ATP binding"/>
    <property type="evidence" value="ECO:0000314"/>
    <property type="project" value="ZFIN"/>
</dbReference>
<dbReference type="GO" id="GO:0035381">
    <property type="term" value="F:ATP-gated ion channel activity"/>
    <property type="evidence" value="ECO:0000314"/>
    <property type="project" value="ZFIN"/>
</dbReference>
<dbReference type="GO" id="GO:0002135">
    <property type="term" value="F:CTP binding"/>
    <property type="evidence" value="ECO:0000314"/>
    <property type="project" value="ZFIN"/>
</dbReference>
<dbReference type="GO" id="GO:0004931">
    <property type="term" value="F:extracellularly ATP-gated monoatomic cation channel activity"/>
    <property type="evidence" value="ECO:0000314"/>
    <property type="project" value="ZFIN"/>
</dbReference>
<dbReference type="GO" id="GO:0042802">
    <property type="term" value="F:identical protein binding"/>
    <property type="evidence" value="ECO:0000353"/>
    <property type="project" value="IntAct"/>
</dbReference>
<dbReference type="GO" id="GO:0015276">
    <property type="term" value="F:ligand-gated monoatomic ion channel activity"/>
    <property type="evidence" value="ECO:0000314"/>
    <property type="project" value="ZFIN"/>
</dbReference>
<dbReference type="GO" id="GO:0017076">
    <property type="term" value="F:purine nucleotide binding"/>
    <property type="evidence" value="ECO:0000314"/>
    <property type="project" value="ZFIN"/>
</dbReference>
<dbReference type="GO" id="GO:0001614">
    <property type="term" value="F:purinergic nucleotide receptor activity"/>
    <property type="evidence" value="ECO:0007669"/>
    <property type="project" value="InterPro"/>
</dbReference>
<dbReference type="GO" id="GO:0006816">
    <property type="term" value="P:calcium ion transport"/>
    <property type="evidence" value="ECO:0000314"/>
    <property type="project" value="ZFIN"/>
</dbReference>
<dbReference type="GO" id="GO:0006812">
    <property type="term" value="P:monoatomic cation transport"/>
    <property type="evidence" value="ECO:0000314"/>
    <property type="project" value="ZFIN"/>
</dbReference>
<dbReference type="GO" id="GO:0033198">
    <property type="term" value="P:response to ATP"/>
    <property type="evidence" value="ECO:0007669"/>
    <property type="project" value="InterPro"/>
</dbReference>
<dbReference type="FunFam" id="2.60.490.10:FF:000001">
    <property type="entry name" value="P2X purinoceptor"/>
    <property type="match status" value="1"/>
</dbReference>
<dbReference type="FunFam" id="1.10.287.940:FF:000010">
    <property type="entry name" value="P2X receptor E"/>
    <property type="match status" value="1"/>
</dbReference>
<dbReference type="Gene3D" id="1.10.287.940">
    <property type="entry name" value="atp-gated p2x4 ion channel"/>
    <property type="match status" value="1"/>
</dbReference>
<dbReference type="Gene3D" id="2.60.490.10">
    <property type="entry name" value="atp-gated p2x4 ion channel domain"/>
    <property type="match status" value="1"/>
</dbReference>
<dbReference type="InterPro" id="IPR003047">
    <property type="entry name" value="P2X4_purnocptor"/>
</dbReference>
<dbReference type="InterPro" id="IPR027309">
    <property type="entry name" value="P2X_extracellular_dom_sf"/>
</dbReference>
<dbReference type="InterPro" id="IPR001429">
    <property type="entry name" value="P2X_purnocptor"/>
</dbReference>
<dbReference type="InterPro" id="IPR053792">
    <property type="entry name" value="P2X_RECEPTOR_CS"/>
</dbReference>
<dbReference type="NCBIfam" id="TIGR00863">
    <property type="entry name" value="P2X"/>
    <property type="match status" value="1"/>
</dbReference>
<dbReference type="PANTHER" id="PTHR10125">
    <property type="entry name" value="P2X PURINOCEPTOR"/>
    <property type="match status" value="1"/>
</dbReference>
<dbReference type="PANTHER" id="PTHR10125:SF18">
    <property type="entry name" value="P2X PURINOCEPTOR 4"/>
    <property type="match status" value="1"/>
</dbReference>
<dbReference type="Pfam" id="PF00864">
    <property type="entry name" value="P2X_receptor"/>
    <property type="match status" value="1"/>
</dbReference>
<dbReference type="PIRSF" id="PIRSF005713">
    <property type="entry name" value="P2X_purinoceptor"/>
    <property type="match status" value="1"/>
</dbReference>
<dbReference type="PRINTS" id="PR01311">
    <property type="entry name" value="P2X4RECEPTOR"/>
</dbReference>
<dbReference type="PRINTS" id="PR01307">
    <property type="entry name" value="P2XRECEPTOR"/>
</dbReference>
<dbReference type="PROSITE" id="PS01212">
    <property type="entry name" value="P2X_RECEPTOR"/>
    <property type="match status" value="1"/>
</dbReference>
<feature type="chain" id="PRO_0000460223" description="P2X purinoceptor 4a">
    <location>
        <begin position="1"/>
        <end position="389"/>
    </location>
</feature>
<feature type="topological domain" description="Cytoplasmic" evidence="9 15">
    <location>
        <begin position="1"/>
        <end position="36"/>
    </location>
</feature>
<feature type="transmembrane region" description="Helical" evidence="9 15">
    <location>
        <begin position="37"/>
        <end position="57"/>
    </location>
</feature>
<feature type="topological domain" description="Extracellular" evidence="9 15">
    <location>
        <begin position="58"/>
        <end position="343"/>
    </location>
</feature>
<feature type="transmembrane region" description="Helical" evidence="9 15">
    <location>
        <begin position="344"/>
        <end position="364"/>
    </location>
</feature>
<feature type="topological domain" description="Cytoplasmic" evidence="9 15">
    <location>
        <begin position="365"/>
        <end position="389"/>
    </location>
</feature>
<feature type="binding site" evidence="6 14">
    <location>
        <position position="70"/>
    </location>
    <ligand>
        <name>ATP</name>
        <dbReference type="ChEBI" id="CHEBI:30616"/>
    </ligand>
</feature>
<feature type="binding site" evidence="7 15">
    <location>
        <position position="70"/>
    </location>
    <ligand>
        <name>CTP</name>
        <dbReference type="ChEBI" id="CHEBI:37563"/>
    </ligand>
</feature>
<feature type="binding site" evidence="6 14">
    <location>
        <position position="72"/>
    </location>
    <ligand>
        <name>ATP</name>
        <dbReference type="ChEBI" id="CHEBI:30616"/>
    </ligand>
</feature>
<feature type="binding site" evidence="7 15">
    <location>
        <position position="72"/>
    </location>
    <ligand>
        <name>CTP</name>
        <dbReference type="ChEBI" id="CHEBI:37563"/>
    </ligand>
</feature>
<feature type="binding site" evidence="7 15">
    <location>
        <position position="143"/>
    </location>
    <ligand>
        <name>CTP</name>
        <dbReference type="ChEBI" id="CHEBI:37563"/>
    </ligand>
</feature>
<feature type="binding site" evidence="6 14">
    <location>
        <position position="189"/>
    </location>
    <ligand>
        <name>ATP</name>
        <dbReference type="ChEBI" id="CHEBI:30616"/>
    </ligand>
</feature>
<feature type="binding site" evidence="7 15">
    <location>
        <position position="189"/>
    </location>
    <ligand>
        <name>CTP</name>
        <dbReference type="ChEBI" id="CHEBI:37563"/>
    </ligand>
</feature>
<feature type="binding site" evidence="6 14">
    <location>
        <position position="191"/>
    </location>
    <ligand>
        <name>ATP</name>
        <dbReference type="ChEBI" id="CHEBI:30616"/>
    </ligand>
</feature>
<feature type="binding site" evidence="6 14">
    <location>
        <position position="296"/>
    </location>
    <ligand>
        <name>ATP</name>
        <dbReference type="ChEBI" id="CHEBI:30616"/>
    </ligand>
</feature>
<feature type="binding site" evidence="7 15">
    <location>
        <position position="296"/>
    </location>
    <ligand>
        <name>CTP</name>
        <dbReference type="ChEBI" id="CHEBI:37563"/>
    </ligand>
</feature>
<feature type="binding site" evidence="6 14">
    <location>
        <position position="298"/>
    </location>
    <ligand>
        <name>ATP</name>
        <dbReference type="ChEBI" id="CHEBI:30616"/>
    </ligand>
</feature>
<feature type="binding site" evidence="7 15">
    <location>
        <position position="298"/>
    </location>
    <ligand>
        <name>CTP</name>
        <dbReference type="ChEBI" id="CHEBI:37563"/>
    </ligand>
</feature>
<feature type="binding site" evidence="6 14">
    <location>
        <position position="316"/>
    </location>
    <ligand>
        <name>ATP</name>
        <dbReference type="ChEBI" id="CHEBI:30616"/>
    </ligand>
</feature>
<feature type="binding site" evidence="7 15">
    <location>
        <position position="316"/>
    </location>
    <ligand>
        <name>CTP</name>
        <dbReference type="ChEBI" id="CHEBI:37563"/>
    </ligand>
</feature>
<feature type="glycosylation site" description="N-linked (GlcNAc...) asparagine" evidence="5 10">
    <location>
        <position position="78"/>
    </location>
</feature>
<feature type="glycosylation site" description="N-linked (GlcNAc...) asparagine" evidence="5 6 11 12 13 14 15">
    <location>
        <position position="113"/>
    </location>
</feature>
<feature type="glycosylation site" description="N-linked (GlcNAc...) asparagine" evidence="5 12">
    <location>
        <position position="187"/>
    </location>
</feature>
<feature type="glycosylation site" description="N-linked (GlcNAc...) asparagine" evidence="5 12 13 14">
    <location>
        <position position="213"/>
    </location>
</feature>
<feature type="disulfide bond" evidence="5 6 11 13">
    <location>
        <begin position="119"/>
        <end position="168"/>
    </location>
</feature>
<feature type="disulfide bond" evidence="5 6 11 13">
    <location>
        <begin position="129"/>
        <end position="152"/>
    </location>
</feature>
<feature type="disulfide bond" evidence="5 6 11 13">
    <location>
        <begin position="135"/>
        <end position="162"/>
    </location>
</feature>
<feature type="disulfide bond" evidence="5 6 11 13">
    <location>
        <begin position="220"/>
        <end position="230"/>
    </location>
</feature>
<feature type="disulfide bond" evidence="5 6 11 13">
    <location>
        <begin position="264"/>
        <end position="273"/>
    </location>
</feature>
<feature type="sequence conflict" description="In Ref. 1; AAK00945." evidence="8" ref="1">
    <original>T</original>
    <variation>S</variation>
    <location>
        <position position="68"/>
    </location>
</feature>
<feature type="sequence conflict" description="In Ref. 2; AAH66495 and 1; AAK00945." evidence="8" ref="2 1">
    <original>M</original>
    <variation>I</variation>
    <location>
        <position position="342"/>
    </location>
</feature>
<feature type="helix" evidence="18">
    <location>
        <begin position="37"/>
        <end position="48"/>
    </location>
</feature>
<feature type="helix" evidence="18">
    <location>
        <begin position="49"/>
        <end position="53"/>
    </location>
</feature>
<feature type="turn" evidence="19">
    <location>
        <begin position="54"/>
        <end position="57"/>
    </location>
</feature>
<feature type="strand" evidence="18">
    <location>
        <begin position="58"/>
        <end position="62"/>
    </location>
</feature>
<feature type="strand" evidence="18">
    <location>
        <begin position="64"/>
        <end position="72"/>
    </location>
</feature>
<feature type="strand" evidence="18">
    <location>
        <begin position="75"/>
        <end position="79"/>
    </location>
</feature>
<feature type="turn" evidence="18">
    <location>
        <begin position="80"/>
        <end position="82"/>
    </location>
</feature>
<feature type="strand" evidence="18">
    <location>
        <begin position="83"/>
        <end position="87"/>
    </location>
</feature>
<feature type="helix" evidence="18">
    <location>
        <begin position="89"/>
        <end position="92"/>
    </location>
</feature>
<feature type="strand" evidence="18">
    <location>
        <begin position="93"/>
        <end position="96"/>
    </location>
</feature>
<feature type="strand" evidence="18">
    <location>
        <begin position="99"/>
        <end position="120"/>
    </location>
</feature>
<feature type="turn" evidence="18">
    <location>
        <begin position="125"/>
        <end position="127"/>
    </location>
</feature>
<feature type="helix" evidence="18">
    <location>
        <begin position="132"/>
        <end position="134"/>
    </location>
</feature>
<feature type="helix" evidence="16">
    <location>
        <begin position="141"/>
        <end position="143"/>
    </location>
</feature>
<feature type="strand" evidence="18">
    <location>
        <begin position="144"/>
        <end position="158"/>
    </location>
</feature>
<feature type="strand" evidence="18">
    <location>
        <begin position="160"/>
        <end position="169"/>
    </location>
</feature>
<feature type="helix" evidence="18">
    <location>
        <begin position="183"/>
        <end position="187"/>
    </location>
</feature>
<feature type="strand" evidence="18">
    <location>
        <begin position="189"/>
        <end position="198"/>
    </location>
</feature>
<feature type="helix" evidence="18">
    <location>
        <begin position="199"/>
        <end position="201"/>
    </location>
</feature>
<feature type="strand" evidence="18">
    <location>
        <begin position="203"/>
        <end position="208"/>
    </location>
</feature>
<feature type="helix" evidence="18">
    <location>
        <begin position="214"/>
        <end position="219"/>
    </location>
</feature>
<feature type="strand" evidence="18">
    <location>
        <begin position="224"/>
        <end position="226"/>
    </location>
</feature>
<feature type="strand" evidence="18">
    <location>
        <begin position="232"/>
        <end position="234"/>
    </location>
</feature>
<feature type="helix" evidence="18">
    <location>
        <begin position="235"/>
        <end position="241"/>
    </location>
</feature>
<feature type="helix" evidence="18">
    <location>
        <begin position="246"/>
        <end position="252"/>
    </location>
</feature>
<feature type="strand" evidence="18">
    <location>
        <begin position="254"/>
        <end position="261"/>
    </location>
</feature>
<feature type="strand" evidence="18">
    <location>
        <begin position="264"/>
        <end position="268"/>
    </location>
</feature>
<feature type="helix" evidence="17">
    <location>
        <begin position="270"/>
        <end position="272"/>
    </location>
</feature>
<feature type="strand" evidence="18">
    <location>
        <begin position="276"/>
        <end position="281"/>
    </location>
</feature>
<feature type="strand" evidence="17">
    <location>
        <begin position="287"/>
        <end position="289"/>
    </location>
</feature>
<feature type="strand" evidence="19">
    <location>
        <begin position="290"/>
        <end position="292"/>
    </location>
</feature>
<feature type="strand" evidence="18">
    <location>
        <begin position="296"/>
        <end position="304"/>
    </location>
</feature>
<feature type="turn" evidence="17">
    <location>
        <begin position="306"/>
        <end position="308"/>
    </location>
</feature>
<feature type="strand" evidence="18">
    <location>
        <begin position="310"/>
        <end position="327"/>
    </location>
</feature>
<feature type="strand" evidence="18">
    <location>
        <begin position="329"/>
        <end position="333"/>
    </location>
</feature>
<feature type="helix" evidence="18">
    <location>
        <begin position="335"/>
        <end position="358"/>
    </location>
</feature>
<protein>
    <recommendedName>
        <fullName>P2X purinoceptor 4a</fullName>
    </recommendedName>
</protein>
<sequence>MSESVGCCDSVSQCFFDYYTSKILIIRSKKVGTLNRFTQALVIAYVIGYVCVYNKGYQDTDTVLSSVTTKVKGIALTNTSELGERIWDVADYIIPPQEDGSFFVLTNMIITTNQTQSKCAENPTPASTCTSHRDCKRGFNDARGDGVRTGRCVSYSASVKTCEVLSWCPLEKIVDPPNPPLLADAENFTVLIKNNIRYPKFNFNKRNILPNINSSYLTHCVFSRKTDPDCPIFRLGDIVGEAEEDFQIMAVHGGVMGVQIRWDCDLDMPQSWCVPRYTFRRLDNKDPDNNVAPGYNFRFAKYYKNSDGTETRTLIKGYGIRFDVMVFGQAGKFNIIPTLLNMGAGLALLGLVNVICDWIVLTFMKRKQHYKEQKYTYVDDFGLLHNEDK</sequence>
<reference key="1">
    <citation type="journal article" date="2002" name="Biochem. Biophys. Res. Commun.">
        <title>Cloning and characterization of two novel zebrafish P2X receptor subunits.</title>
        <authorList>
            <person name="Diaz-Hernandez M."/>
            <person name="Cox J.A."/>
            <person name="Migita K."/>
            <person name="Haines W."/>
            <person name="Egan T.M."/>
            <person name="Voigt M.M."/>
        </authorList>
    </citation>
    <scope>NUCLEOTIDE SEQUENCE [MRNA]</scope>
</reference>
<reference key="2">
    <citation type="journal article" date="2013" name="Nature">
        <title>The zebrafish reference genome sequence and its relationship to the human genome.</title>
        <authorList>
            <person name="Howe K."/>
            <person name="Clark M.D."/>
            <person name="Torroja C.F."/>
            <person name="Torrance J."/>
            <person name="Berthelot C."/>
            <person name="Muffato M."/>
            <person name="Collins J.E."/>
            <person name="Humphray S."/>
            <person name="McLaren K."/>
            <person name="Matthews L."/>
            <person name="McLaren S."/>
            <person name="Sealy I."/>
            <person name="Caccamo M."/>
            <person name="Churcher C."/>
            <person name="Scott C."/>
            <person name="Barrett J.C."/>
            <person name="Koch R."/>
            <person name="Rauch G.J."/>
            <person name="White S."/>
            <person name="Chow W."/>
            <person name="Kilian B."/>
            <person name="Quintais L.T."/>
            <person name="Guerra-Assuncao J.A."/>
            <person name="Zhou Y."/>
            <person name="Gu Y."/>
            <person name="Yen J."/>
            <person name="Vogel J.H."/>
            <person name="Eyre T."/>
            <person name="Redmond S."/>
            <person name="Banerjee R."/>
            <person name="Chi J."/>
            <person name="Fu B."/>
            <person name="Langley E."/>
            <person name="Maguire S.F."/>
            <person name="Laird G.K."/>
            <person name="Lloyd D."/>
            <person name="Kenyon E."/>
            <person name="Donaldson S."/>
            <person name="Sehra H."/>
            <person name="Almeida-King J."/>
            <person name="Loveland J."/>
            <person name="Trevanion S."/>
            <person name="Jones M."/>
            <person name="Quail M."/>
            <person name="Willey D."/>
            <person name="Hunt A."/>
            <person name="Burton J."/>
            <person name="Sims S."/>
            <person name="McLay K."/>
            <person name="Plumb B."/>
            <person name="Davis J."/>
            <person name="Clee C."/>
            <person name="Oliver K."/>
            <person name="Clark R."/>
            <person name="Riddle C."/>
            <person name="Elliot D."/>
            <person name="Threadgold G."/>
            <person name="Harden G."/>
            <person name="Ware D."/>
            <person name="Begum S."/>
            <person name="Mortimore B."/>
            <person name="Kerry G."/>
            <person name="Heath P."/>
            <person name="Phillimore B."/>
            <person name="Tracey A."/>
            <person name="Corby N."/>
            <person name="Dunn M."/>
            <person name="Johnson C."/>
            <person name="Wood J."/>
            <person name="Clark S."/>
            <person name="Pelan S."/>
            <person name="Griffiths G."/>
            <person name="Smith M."/>
            <person name="Glithero R."/>
            <person name="Howden P."/>
            <person name="Barker N."/>
            <person name="Lloyd C."/>
            <person name="Stevens C."/>
            <person name="Harley J."/>
            <person name="Holt K."/>
            <person name="Panagiotidis G."/>
            <person name="Lovell J."/>
            <person name="Beasley H."/>
            <person name="Henderson C."/>
            <person name="Gordon D."/>
            <person name="Auger K."/>
            <person name="Wright D."/>
            <person name="Collins J."/>
            <person name="Raisen C."/>
            <person name="Dyer L."/>
            <person name="Leung K."/>
            <person name="Robertson L."/>
            <person name="Ambridge K."/>
            <person name="Leongamornlert D."/>
            <person name="McGuire S."/>
            <person name="Gilderthorp R."/>
            <person name="Griffiths C."/>
            <person name="Manthravadi D."/>
            <person name="Nichol S."/>
            <person name="Barker G."/>
            <person name="Whitehead S."/>
            <person name="Kay M."/>
            <person name="Brown J."/>
            <person name="Murnane C."/>
            <person name="Gray E."/>
            <person name="Humphries M."/>
            <person name="Sycamore N."/>
            <person name="Barker D."/>
            <person name="Saunders D."/>
            <person name="Wallis J."/>
            <person name="Babbage A."/>
            <person name="Hammond S."/>
            <person name="Mashreghi-Mohammadi M."/>
            <person name="Barr L."/>
            <person name="Martin S."/>
            <person name="Wray P."/>
            <person name="Ellington A."/>
            <person name="Matthews N."/>
            <person name="Ellwood M."/>
            <person name="Woodmansey R."/>
            <person name="Clark G."/>
            <person name="Cooper J."/>
            <person name="Tromans A."/>
            <person name="Grafham D."/>
            <person name="Skuce C."/>
            <person name="Pandian R."/>
            <person name="Andrews R."/>
            <person name="Harrison E."/>
            <person name="Kimberley A."/>
            <person name="Garnett J."/>
            <person name="Fosker N."/>
            <person name="Hall R."/>
            <person name="Garner P."/>
            <person name="Kelly D."/>
            <person name="Bird C."/>
            <person name="Palmer S."/>
            <person name="Gehring I."/>
            <person name="Berger A."/>
            <person name="Dooley C.M."/>
            <person name="Ersan-Urun Z."/>
            <person name="Eser C."/>
            <person name="Geiger H."/>
            <person name="Geisler M."/>
            <person name="Karotki L."/>
            <person name="Kirn A."/>
            <person name="Konantz J."/>
            <person name="Konantz M."/>
            <person name="Oberlander M."/>
            <person name="Rudolph-Geiger S."/>
            <person name="Teucke M."/>
            <person name="Lanz C."/>
            <person name="Raddatz G."/>
            <person name="Osoegawa K."/>
            <person name="Zhu B."/>
            <person name="Rapp A."/>
            <person name="Widaa S."/>
            <person name="Langford C."/>
            <person name="Yang F."/>
            <person name="Schuster S.C."/>
            <person name="Carter N.P."/>
            <person name="Harrow J."/>
            <person name="Ning Z."/>
            <person name="Herrero J."/>
            <person name="Searle S.M."/>
            <person name="Enright A."/>
            <person name="Geisler R."/>
            <person name="Plasterk R.H."/>
            <person name="Lee C."/>
            <person name="Westerfield M."/>
            <person name="de Jong P.J."/>
            <person name="Zon L.I."/>
            <person name="Postlethwait J.H."/>
            <person name="Nusslein-Volhard C."/>
            <person name="Hubbard T.J."/>
            <person name="Roest Crollius H."/>
            <person name="Rogers J."/>
            <person name="Stemple D.L."/>
        </authorList>
    </citation>
    <scope>NUCLEOTIDE SEQUENCE [LARGE SCALE GENOMIC DNA]</scope>
    <source>
        <strain>Tuebingen</strain>
    </source>
</reference>
<reference key="3">
    <citation type="submission" date="2004-02" db="EMBL/GenBank/DDBJ databases">
        <authorList>
            <consortium name="NIH - Zebrafish Gene Collection (ZGC) project"/>
        </authorList>
    </citation>
    <scope>NUCLEOTIDE SEQUENCE [LARGE SCALE MRNA]</scope>
</reference>
<reference evidence="11 12" key="4">
    <citation type="journal article" date="2009" name="Nature">
        <title>Crystal structure of the ATP-gated P2X(4) ion channel in the closed state.</title>
        <authorList>
            <person name="Kawate T."/>
            <person name="Michel J.C."/>
            <person name="Birdsong W.T."/>
            <person name="Gouaux E."/>
        </authorList>
    </citation>
    <scope>X-RAY CRYSTALLOGRAPHY (3.10 ANGSTROMS) OF 28-381</scope>
    <scope>DISULFIDE BONDS</scope>
    <scope>GLYCOSYLATION AT ASN-78; ASN-113; ASN-187 AND ASN-213</scope>
    <scope>SUBUNIT</scope>
</reference>
<reference evidence="13 14" key="5">
    <citation type="journal article" date="2012" name="Nature">
        <title>Molecular mechanism of ATP binding and ion channel activation in P2X receptors.</title>
        <authorList>
            <person name="Hattori M."/>
            <person name="Gouaux E."/>
        </authorList>
    </citation>
    <scope>X-RAY CRYSTALLOGRAPHY (2.80 ANGSTROMS) OF 28-365 IN COMPLEX WITH ATP</scope>
    <scope>GLYCOSYLATION AT ASN-113</scope>
    <scope>DISULFIDE BOND</scope>
    <scope>SUBUNIT</scope>
    <scope>FUNCTION</scope>
</reference>
<reference evidence="15" key="6">
    <citation type="journal article" date="2017" name="Sci. Rep.">
        <title>Structural insights into the nucleotide base specificity of P2X receptors.</title>
        <authorList>
            <person name="Kasuya G."/>
            <person name="Fujiwara Y."/>
            <person name="Tsukamoto H."/>
            <person name="Morinaga S."/>
            <person name="Ryu S."/>
            <person name="Touhara K."/>
            <person name="Ishitani R."/>
            <person name="Furutani Y."/>
            <person name="Hattori M."/>
            <person name="Nureki O."/>
        </authorList>
    </citation>
    <scope>X-RAY CRYSTALLOGRAPHY (2.80 ANGSTROMS) OF 28-365 IN COMPLEX WITH CTP</scope>
    <scope>GLYCOSYLATION AT ASN-113</scope>
    <scope>SUBUNIT</scope>
</reference>
<gene>
    <name type="primary">p2rx4a</name>
</gene>
<evidence type="ECO:0000250" key="1">
    <source>
        <dbReference type="UniProtKB" id="P51577"/>
    </source>
</evidence>
<evidence type="ECO:0000250" key="2">
    <source>
        <dbReference type="UniProtKB" id="Q99571"/>
    </source>
</evidence>
<evidence type="ECO:0000250" key="3">
    <source>
        <dbReference type="UniProtKB" id="Q9JJX6"/>
    </source>
</evidence>
<evidence type="ECO:0000255" key="4"/>
<evidence type="ECO:0000269" key="5">
    <source>
    </source>
</evidence>
<evidence type="ECO:0000269" key="6">
    <source>
    </source>
</evidence>
<evidence type="ECO:0000269" key="7">
    <source>
    </source>
</evidence>
<evidence type="ECO:0000305" key="8"/>
<evidence type="ECO:0000305" key="9">
    <source>
    </source>
</evidence>
<evidence type="ECO:0000312" key="10">
    <source>
        <dbReference type="PDB" id="3I5D"/>
    </source>
</evidence>
<evidence type="ECO:0007744" key="11">
    <source>
        <dbReference type="PDB" id="3H9V"/>
    </source>
</evidence>
<evidence type="ECO:0007744" key="12">
    <source>
        <dbReference type="PDB" id="3I5D"/>
    </source>
</evidence>
<evidence type="ECO:0007744" key="13">
    <source>
        <dbReference type="PDB" id="4DW0"/>
    </source>
</evidence>
<evidence type="ECO:0007744" key="14">
    <source>
        <dbReference type="PDB" id="4DW1"/>
    </source>
</evidence>
<evidence type="ECO:0007744" key="15">
    <source>
        <dbReference type="PDB" id="5WZY"/>
    </source>
</evidence>
<evidence type="ECO:0007829" key="16">
    <source>
        <dbReference type="PDB" id="3H9V"/>
    </source>
</evidence>
<evidence type="ECO:0007829" key="17">
    <source>
        <dbReference type="PDB" id="4DW0"/>
    </source>
</evidence>
<evidence type="ECO:0007829" key="18">
    <source>
        <dbReference type="PDB" id="5WZY"/>
    </source>
</evidence>
<evidence type="ECO:0007829" key="19">
    <source>
        <dbReference type="PDB" id="8JV6"/>
    </source>
</evidence>